<evidence type="ECO:0000255" key="1">
    <source>
        <dbReference type="PROSITE-ProRule" id="PRU00718"/>
    </source>
</evidence>
<evidence type="ECO:0000269" key="2">
    <source>
    </source>
</evidence>
<evidence type="ECO:0000269" key="3">
    <source>
    </source>
</evidence>
<evidence type="ECO:0000303" key="4">
    <source>
    </source>
</evidence>
<evidence type="ECO:0000305" key="5"/>
<feature type="chain" id="PRO_0000446452" description="Aurantioclavine synthase cnsA">
    <location>
        <begin position="1"/>
        <end position="463"/>
    </location>
</feature>
<feature type="domain" description="FAD-binding PCMH-type" evidence="1">
    <location>
        <begin position="16"/>
        <end position="199"/>
    </location>
</feature>
<proteinExistence type="evidence at protein level"/>
<dbReference type="EC" id="1.-.-.-" evidence="2"/>
<dbReference type="EMBL" id="JQFZ01000090">
    <property type="protein sequence ID" value="KGO59694.1"/>
    <property type="molecule type" value="Genomic_DNA"/>
</dbReference>
<dbReference type="RefSeq" id="XP_016600807.1">
    <property type="nucleotide sequence ID" value="XM_016742809.1"/>
</dbReference>
<dbReference type="SMR" id="A0A0A2KMZ4"/>
<dbReference type="STRING" id="27334.A0A0A2KMZ4"/>
<dbReference type="GeneID" id="27678228"/>
<dbReference type="VEuPathDB" id="FungiDB:PEXP_030460"/>
<dbReference type="HOGENOM" id="CLU_590656_0_0_1"/>
<dbReference type="OrthoDB" id="9983560at2759"/>
<dbReference type="PhylomeDB" id="A0A0A2KMZ4"/>
<dbReference type="Proteomes" id="UP000030143">
    <property type="component" value="Unassembled WGS sequence"/>
</dbReference>
<dbReference type="GO" id="GO:0071949">
    <property type="term" value="F:FAD binding"/>
    <property type="evidence" value="ECO:0007669"/>
    <property type="project" value="InterPro"/>
</dbReference>
<dbReference type="GO" id="GO:0016491">
    <property type="term" value="F:oxidoreductase activity"/>
    <property type="evidence" value="ECO:0007669"/>
    <property type="project" value="UniProtKB-KW"/>
</dbReference>
<dbReference type="Gene3D" id="3.30.465.10">
    <property type="match status" value="1"/>
</dbReference>
<dbReference type="InterPro" id="IPR012951">
    <property type="entry name" value="BBE"/>
</dbReference>
<dbReference type="InterPro" id="IPR016166">
    <property type="entry name" value="FAD-bd_PCMH"/>
</dbReference>
<dbReference type="InterPro" id="IPR036318">
    <property type="entry name" value="FAD-bd_PCMH-like_sf"/>
</dbReference>
<dbReference type="InterPro" id="IPR016169">
    <property type="entry name" value="FAD-bd_PCMH_sub2"/>
</dbReference>
<dbReference type="InterPro" id="IPR050416">
    <property type="entry name" value="FAD-linked_Oxidoreductase"/>
</dbReference>
<dbReference type="InterPro" id="IPR006094">
    <property type="entry name" value="Oxid_FAD_bind_N"/>
</dbReference>
<dbReference type="PANTHER" id="PTHR42973">
    <property type="entry name" value="BINDING OXIDOREDUCTASE, PUTATIVE (AFU_ORTHOLOGUE AFUA_1G17690)-RELATED"/>
    <property type="match status" value="1"/>
</dbReference>
<dbReference type="PANTHER" id="PTHR42973:SF39">
    <property type="entry name" value="FAD-BINDING PCMH-TYPE DOMAIN-CONTAINING PROTEIN"/>
    <property type="match status" value="1"/>
</dbReference>
<dbReference type="Pfam" id="PF08031">
    <property type="entry name" value="BBE"/>
    <property type="match status" value="1"/>
</dbReference>
<dbReference type="Pfam" id="PF01565">
    <property type="entry name" value="FAD_binding_4"/>
    <property type="match status" value="1"/>
</dbReference>
<dbReference type="SUPFAM" id="SSF56176">
    <property type="entry name" value="FAD-binding/transporter-associated domain-like"/>
    <property type="match status" value="1"/>
</dbReference>
<dbReference type="PROSITE" id="PS51387">
    <property type="entry name" value="FAD_PCMH"/>
    <property type="match status" value="1"/>
</dbReference>
<reference key="1">
    <citation type="journal article" date="2015" name="Mol. Plant Microbe Interact.">
        <title>Genome, transcriptome, and functional analyses of Penicillium expansum provide new insights into secondary metabolism and pathogenicity.</title>
        <authorList>
            <person name="Ballester A.R."/>
            <person name="Marcet-Houben M."/>
            <person name="Levin E."/>
            <person name="Sela N."/>
            <person name="Selma-Lazaro C."/>
            <person name="Carmona L."/>
            <person name="Wisniewski M."/>
            <person name="Droby S."/>
            <person name="Gonzalez-Candelas L."/>
            <person name="Gabaldon T."/>
        </authorList>
    </citation>
    <scope>NUCLEOTIDE SEQUENCE [LARGE SCALE GENOMIC DNA]</scope>
    <source>
        <strain>MD-8</strain>
    </source>
</reference>
<reference key="2">
    <citation type="journal article" date="2015" name="Angew. Chem. Int. Ed.">
        <title>Elucidation of the concise biosynthetic pathway of the communesin indole alkaloids.</title>
        <authorList>
            <person name="Lin H.C."/>
            <person name="Chiou G."/>
            <person name="Chooi Y.H."/>
            <person name="McMahon T.C."/>
            <person name="Xu W."/>
            <person name="Garg N.K."/>
            <person name="Tang Y."/>
        </authorList>
    </citation>
    <scope>IDENTIFICATION</scope>
    <scope>FUNCTION</scope>
    <scope>DISRUPTION PHENOTYPE</scope>
    <scope>CATALYTIC ACTIVITY</scope>
    <scope>PATHWAY</scope>
</reference>
<reference key="3">
    <citation type="journal article" date="2016" name="J. Am. Chem. Soc.">
        <title>P450-mediated coupling of indole fragments to forge communesin and unnatural isomers.</title>
        <authorList>
            <person name="Lin H.C."/>
            <person name="McMahon T.C."/>
            <person name="Patel A."/>
            <person name="Corsello M."/>
            <person name="Simon A."/>
            <person name="Xu W."/>
            <person name="Zhao M."/>
            <person name="Houk K.N."/>
            <person name="Garg N.K."/>
            <person name="Tang Y."/>
        </authorList>
    </citation>
    <scope>FUNCTION</scope>
</reference>
<accession>A0A0A2KMZ4</accession>
<name>CNSA_PENEN</name>
<gene>
    <name evidence="4" type="primary">cnsA</name>
    <name type="ORF">PEX2_055350</name>
</gene>
<protein>
    <recommendedName>
        <fullName evidence="4">Aurantioclavine synthase cnsA</fullName>
        <ecNumber evidence="2">1.-.-.-</ecNumber>
    </recommendedName>
    <alternativeName>
        <fullName evidence="4">Communesin biosynthesis cluster protein A</fullName>
    </alternativeName>
    <alternativeName>
        <fullName evidence="4">FAD-linked oxidoreductase cnsA</fullName>
    </alternativeName>
</protein>
<comment type="function">
    <text evidence="2 3">FAD-linked oxidoreductase; part of the gene cluster that mediates the biosynthesis of communesins, a prominent class of indole alkaloids with great potential as pharmaceuticals (PubMed:25571861). Communesins are biosynthesized by the coupling of tryptamine and aurantioclavine, two building blocks derived from L-tryptophan (PubMed:25571861). The L-tryptophan decarboxylase cnsB converts L-tryptophan to tryptamine, whereas the tryptophan dimethylallyltransferase cnsF converts L-tryptophan to 4-dimethylallyl tryptophan which is further transformed to aurantioclavine by the aurantioclavine synthase cnsA, probably aided by the catalase cnsD (PubMed:25571861). The cytochrome P450 monooxygenase cnsC catalyzes the heterodimeric coupling between the two different indole moieties, tryptamine and aurantioclavine, to construct vicinal quaternary stereocenters and yield the heptacyclic communesin scaffold (PubMed:26963294). The O-methyltransferase cnsE then methylates the communesin scaffold to produce communesin K, the simplest characterized communesin that contains the heptacyclic core (PubMed:25571861). The dioxygenase cnsJ converts communesin K into communesin I (PubMed:25571861). Acylation to introduce the hexadienyl group at position N16 of communesin I by the acyltransferase cnsK leads to the production of communesin B. The hexadienyl group is produced by the highly reducing polyketide synthase cnsI, before being hydrolytically removed from cnsI by the serine hydrolase cnsH, converted into hexadienyl-CoA by the CoA ligase cnsG, and then transferred to communesin I by cnsK (PubMed:25571861). Surprisingly, cnsK may also be a promiscuous acyltransferase that can tolerate a range of acyl groups, including acetyl-, propionyl-, and butyryl-CoA, which lead to communesins A, G and H respectively (PubMed:25571861). The roles of the alpha-ketoglutarate-dependent dioxygenases cnsM and cnsP have still to be determined (PubMed:25571861).</text>
</comment>
<comment type="cofactor">
    <cofactor evidence="5">
        <name>FAD</name>
        <dbReference type="ChEBI" id="CHEBI:57692"/>
    </cofactor>
</comment>
<comment type="pathway">
    <text evidence="2">Alkaloid biosynthesis.</text>
</comment>
<comment type="disruption phenotype">
    <text evidence="2">Abolishes the biosynthesis of communesins A and B and leads to the accumulation of 4-dimethylallyl tryptophan (4-DMAT).</text>
</comment>
<comment type="similarity">
    <text evidence="5">Belongs to the oxygen-dependent FAD-linked oxidoreductase family.</text>
</comment>
<keyword id="KW-0274">FAD</keyword>
<keyword id="KW-0285">Flavoprotein</keyword>
<keyword id="KW-0560">Oxidoreductase</keyword>
<keyword id="KW-1185">Reference proteome</keyword>
<sequence length="463" mass="51122">MEGCTTRDSTGLGLGERFNQRGNVFLRLVSHVQCAIKFAKNHNLRLVIRNTGHDGSGRSSAPGSFEIHTHHLKHTHYHDDFQPVGAVTTSGPAVTVGAGVILGDLYAEGARQGYTVVGGVCPTVGFVGGFLQGGGVSGKFSHNRGLAVDNVLEIQAVTADGDLVVANDYHNQDLFWALRGGGGGTFAVVTQATVRVFPDVPCVTTQLAVSAPEGLDDHSWMQVLELLLRGLRSFNEERIAGEFHLRPDPLSAILTLHFLNTSDLDSVDRRLAALIDKFRTSEIPHIYSSKSHALEVPRSVEAKLYASHELTSVQMPVLYSLDPSYKVSYLNMGDPNDADFRNVYWGPNYERLLALKQKWDVDALFITRLGKRHDVMNTIPSTGAGADMRSFNRDIYDLLRNHAEDPRLNEVWTAINTVTEWVDWITSNGARMIPSDIAFRFWMLRVYMTHDWGCGLTSSTAEL</sequence>
<organism>
    <name type="scientific">Penicillium expansum</name>
    <name type="common">Blue mold rot fungus</name>
    <dbReference type="NCBI Taxonomy" id="27334"/>
    <lineage>
        <taxon>Eukaryota</taxon>
        <taxon>Fungi</taxon>
        <taxon>Dikarya</taxon>
        <taxon>Ascomycota</taxon>
        <taxon>Pezizomycotina</taxon>
        <taxon>Eurotiomycetes</taxon>
        <taxon>Eurotiomycetidae</taxon>
        <taxon>Eurotiales</taxon>
        <taxon>Aspergillaceae</taxon>
        <taxon>Penicillium</taxon>
    </lineage>
</organism>